<name>LST2_DROYA</name>
<feature type="chain" id="PRO_0000378971" description="Lateral signaling target protein 2 homolog">
    <location>
        <begin position="1"/>
        <end position="984"/>
    </location>
</feature>
<feature type="zinc finger region" description="FYVE-type" evidence="2">
    <location>
        <begin position="904"/>
        <end position="964"/>
    </location>
</feature>
<feature type="region of interest" description="Disordered" evidence="3">
    <location>
        <begin position="308"/>
        <end position="462"/>
    </location>
</feature>
<feature type="region of interest" description="Disordered" evidence="3">
    <location>
        <begin position="508"/>
        <end position="527"/>
    </location>
</feature>
<feature type="region of interest" description="Disordered" evidence="3">
    <location>
        <begin position="539"/>
        <end position="642"/>
    </location>
</feature>
<feature type="region of interest" description="Disordered" evidence="3">
    <location>
        <begin position="749"/>
        <end position="900"/>
    </location>
</feature>
<feature type="compositionally biased region" description="Low complexity" evidence="3">
    <location>
        <begin position="326"/>
        <end position="356"/>
    </location>
</feature>
<feature type="compositionally biased region" description="Low complexity" evidence="3">
    <location>
        <begin position="369"/>
        <end position="380"/>
    </location>
</feature>
<feature type="compositionally biased region" description="Low complexity" evidence="3">
    <location>
        <begin position="387"/>
        <end position="404"/>
    </location>
</feature>
<feature type="compositionally biased region" description="Low complexity" evidence="3">
    <location>
        <begin position="412"/>
        <end position="433"/>
    </location>
</feature>
<feature type="compositionally biased region" description="Acidic residues" evidence="3">
    <location>
        <begin position="434"/>
        <end position="462"/>
    </location>
</feature>
<feature type="compositionally biased region" description="Basic residues" evidence="3">
    <location>
        <begin position="571"/>
        <end position="611"/>
    </location>
</feature>
<feature type="compositionally biased region" description="Low complexity" evidence="3">
    <location>
        <begin position="630"/>
        <end position="642"/>
    </location>
</feature>
<feature type="compositionally biased region" description="Polar residues" evidence="3">
    <location>
        <begin position="760"/>
        <end position="779"/>
    </location>
</feature>
<feature type="compositionally biased region" description="Polar residues" evidence="3">
    <location>
        <begin position="789"/>
        <end position="806"/>
    </location>
</feature>
<feature type="compositionally biased region" description="Low complexity" evidence="3">
    <location>
        <begin position="811"/>
        <end position="869"/>
    </location>
</feature>
<feature type="compositionally biased region" description="Low complexity" evidence="3">
    <location>
        <begin position="886"/>
        <end position="899"/>
    </location>
</feature>
<feature type="binding site" evidence="2">
    <location>
        <position position="910"/>
    </location>
    <ligand>
        <name>Zn(2+)</name>
        <dbReference type="ChEBI" id="CHEBI:29105"/>
        <label>1</label>
    </ligand>
</feature>
<feature type="binding site" evidence="2">
    <location>
        <position position="913"/>
    </location>
    <ligand>
        <name>Zn(2+)</name>
        <dbReference type="ChEBI" id="CHEBI:29105"/>
        <label>1</label>
    </ligand>
</feature>
<feature type="binding site" evidence="2">
    <location>
        <position position="926"/>
    </location>
    <ligand>
        <name>Zn(2+)</name>
        <dbReference type="ChEBI" id="CHEBI:29105"/>
        <label>2</label>
    </ligand>
</feature>
<feature type="binding site" evidence="2">
    <location>
        <position position="929"/>
    </location>
    <ligand>
        <name>Zn(2+)</name>
        <dbReference type="ChEBI" id="CHEBI:29105"/>
        <label>2</label>
    </ligand>
</feature>
<feature type="binding site" evidence="2">
    <location>
        <position position="934"/>
    </location>
    <ligand>
        <name>Zn(2+)</name>
        <dbReference type="ChEBI" id="CHEBI:29105"/>
        <label>1</label>
    </ligand>
</feature>
<feature type="binding site" evidence="2">
    <location>
        <position position="937"/>
    </location>
    <ligand>
        <name>Zn(2+)</name>
        <dbReference type="ChEBI" id="CHEBI:29105"/>
        <label>1</label>
    </ligand>
</feature>
<feature type="binding site" evidence="2">
    <location>
        <position position="956"/>
    </location>
    <ligand>
        <name>Zn(2+)</name>
        <dbReference type="ChEBI" id="CHEBI:29105"/>
        <label>2</label>
    </ligand>
</feature>
<feature type="binding site" evidence="2">
    <location>
        <position position="959"/>
    </location>
    <ligand>
        <name>Zn(2+)</name>
        <dbReference type="ChEBI" id="CHEBI:29105"/>
        <label>2</label>
    </ligand>
</feature>
<feature type="modified residue" description="Phosphoserine" evidence="1">
    <location>
        <position position="544"/>
    </location>
</feature>
<feature type="modified residue" description="Phosphoserine" evidence="1">
    <location>
        <position position="545"/>
    </location>
</feature>
<feature type="modified residue" description="Phosphoserine" evidence="1">
    <location>
        <position position="805"/>
    </location>
</feature>
<gene>
    <name type="ORF">GE10583</name>
</gene>
<protein>
    <recommendedName>
        <fullName>Lateral signaling target protein 2 homolog</fullName>
    </recommendedName>
</protein>
<keyword id="KW-0479">Metal-binding</keyword>
<keyword id="KW-0597">Phosphoprotein</keyword>
<keyword id="KW-0862">Zinc</keyword>
<keyword id="KW-0863">Zinc-finger</keyword>
<evidence type="ECO:0000250" key="1"/>
<evidence type="ECO:0000255" key="2">
    <source>
        <dbReference type="PROSITE-ProRule" id="PRU00091"/>
    </source>
</evidence>
<evidence type="ECO:0000256" key="3">
    <source>
        <dbReference type="SAM" id="MobiDB-lite"/>
    </source>
</evidence>
<evidence type="ECO:0000305" key="4"/>
<sequence>MDTFKRWLNKPKADDKSLLARFFHADRSLTAVASELDSFDGRAEPDRCTRLVSRLRQNQDKVLAITNLIMEELLGEDRDPRAFRAKFPEEVLQENLAGQLWFGAECLAAGSSIMNRETESKEMRPLAQAVTKSLGNVRVLLRDQCLKNNVPNSKTLHLDLNDSTTEQLYESLKIFDRLFAEFELSYVSAMVQVKSRHEYEMQQWIGVLFSETLQRALKIGLLDQEMVDAFDPGLMFSIPRLAIVAGLVVYAKGPLNMDMPGDQLSEMFRPFRTILIKIRDLLRNLNNQELYQLEKLLCTNEDINTKVPLGSSSIEAPSPEHSAHPTTSSSQNNNNSSNNNHSSSSSTTTTMGTTSTHRTVERLVDQRNNNHNSNSNSSTNPTVEGATLRSPSMLSLSPTSTPTASPAPSPTPSHSIASTSSAATSSTNPPADWSDGDDEDEDDDDIEVDEEDLESSDDDTDEEQLLKDIVAADCASGYLIPNTNLGNLLQPQEVPLTDNFVASEDDEYGTTEQQGHQGLEEEEPSTSAAMLAATRTLQRLRLPSSDTEPLAEPTTIKATEEHMQQPSGRHRESHSHRHHQRHHHHHHHRHSHQHQHRQPHPHRTTRSGRKRCSLEAVDPETIQPEREQNLASGDTSAASSLSDDVSLAMRNTTARLKFKSTENLLHRLFVCIAGVADQLQTNFASDLRQILRSVFLMNMSSAQEEIDIPEKTKESELFEFRASENDVIQESAGSNQSIYSAEEVNPELDNVFSAGGGNQATGQRHSAGASMQRNNTIDLANQPGEGSPSGATMATSRSHVTRSRSLGDQEAASSATSSTAHLRQQEQQQQHQQLQIQLQRQRNNSVGSNTPSSASSTSSSSEQNSPVSARSGSRRRLQSNNETQMPSSATSTSATLSPPAWIPDGKAPRCMACQTPFTAFRRRHHCRNCGGVFCGVCSNASAPLPKYGLTKAVRVCRDCYVREVRSGMGVQGVQRVQSVQASAS</sequence>
<accession>B4PRU6</accession>
<comment type="function">
    <text evidence="1">Negative regulator of epidermal growth factor receptor (EGFR) signaling.</text>
</comment>
<comment type="similarity">
    <text evidence="4">Belongs to the lst-2 family.</text>
</comment>
<proteinExistence type="inferred from homology"/>
<dbReference type="EMBL" id="CM000160">
    <property type="protein sequence ID" value="EDW98539.1"/>
    <property type="molecule type" value="Genomic_DNA"/>
</dbReference>
<dbReference type="SMR" id="B4PRU6"/>
<dbReference type="EnsemblMetazoa" id="FBtr0257101">
    <property type="protein sequence ID" value="FBpp0255593"/>
    <property type="gene ID" value="FBgn0228438"/>
</dbReference>
<dbReference type="EnsemblMetazoa" id="XM_002098791.3">
    <property type="protein sequence ID" value="XP_002098827.1"/>
    <property type="gene ID" value="LOC6538300"/>
</dbReference>
<dbReference type="GeneID" id="6538300"/>
<dbReference type="KEGG" id="dya:Dyak_GE10583"/>
<dbReference type="eggNOG" id="KOG1819">
    <property type="taxonomic scope" value="Eukaryota"/>
</dbReference>
<dbReference type="HOGENOM" id="CLU_007360_1_0_1"/>
<dbReference type="OMA" id="CYVREVQ"/>
<dbReference type="OrthoDB" id="20035at2759"/>
<dbReference type="PhylomeDB" id="B4PRU6"/>
<dbReference type="Proteomes" id="UP000002282">
    <property type="component" value="Chromosome 3R"/>
</dbReference>
<dbReference type="GO" id="GO:0031901">
    <property type="term" value="C:early endosome membrane"/>
    <property type="evidence" value="ECO:0007669"/>
    <property type="project" value="TreeGrafter"/>
</dbReference>
<dbReference type="GO" id="GO:0008270">
    <property type="term" value="F:zinc ion binding"/>
    <property type="evidence" value="ECO:0007669"/>
    <property type="project" value="UniProtKB-KW"/>
</dbReference>
<dbReference type="CDD" id="cd15731">
    <property type="entry name" value="FYVE_LST2"/>
    <property type="match status" value="1"/>
</dbReference>
<dbReference type="FunFam" id="3.30.40.10:FF:000073">
    <property type="entry name" value="myotubularin-related protein 4 isoform X2"/>
    <property type="match status" value="1"/>
</dbReference>
<dbReference type="Gene3D" id="3.30.40.10">
    <property type="entry name" value="Zinc/RING finger domain, C3HC4 (zinc finger)"/>
    <property type="match status" value="1"/>
</dbReference>
<dbReference type="InterPro" id="IPR043269">
    <property type="entry name" value="FYVE_LST2"/>
</dbReference>
<dbReference type="InterPro" id="IPR051118">
    <property type="entry name" value="LST-2"/>
</dbReference>
<dbReference type="InterPro" id="IPR000306">
    <property type="entry name" value="Znf_FYVE"/>
</dbReference>
<dbReference type="InterPro" id="IPR017455">
    <property type="entry name" value="Znf_FYVE-rel"/>
</dbReference>
<dbReference type="InterPro" id="IPR011011">
    <property type="entry name" value="Znf_FYVE_PHD"/>
</dbReference>
<dbReference type="InterPro" id="IPR013083">
    <property type="entry name" value="Znf_RING/FYVE/PHD"/>
</dbReference>
<dbReference type="PANTHER" id="PTHR46465">
    <property type="entry name" value="LATERAL SIGNALING TARGET PROTEIN 2 HOMOLOG"/>
    <property type="match status" value="1"/>
</dbReference>
<dbReference type="PANTHER" id="PTHR46465:SF2">
    <property type="entry name" value="LATERAL SIGNALING TARGET PROTEIN 2 HOMOLOG"/>
    <property type="match status" value="1"/>
</dbReference>
<dbReference type="Pfam" id="PF01363">
    <property type="entry name" value="FYVE"/>
    <property type="match status" value="1"/>
</dbReference>
<dbReference type="SMART" id="SM00064">
    <property type="entry name" value="FYVE"/>
    <property type="match status" value="1"/>
</dbReference>
<dbReference type="SUPFAM" id="SSF57903">
    <property type="entry name" value="FYVE/PHD zinc finger"/>
    <property type="match status" value="1"/>
</dbReference>
<dbReference type="PROSITE" id="PS50178">
    <property type="entry name" value="ZF_FYVE"/>
    <property type="match status" value="1"/>
</dbReference>
<reference key="1">
    <citation type="journal article" date="2007" name="Nature">
        <title>Evolution of genes and genomes on the Drosophila phylogeny.</title>
        <authorList>
            <consortium name="Drosophila 12 genomes consortium"/>
        </authorList>
    </citation>
    <scope>NUCLEOTIDE SEQUENCE [LARGE SCALE GENOMIC DNA]</scope>
    <source>
        <strain>Tai18E2 / Tucson 14021-0261.01</strain>
    </source>
</reference>
<organism>
    <name type="scientific">Drosophila yakuba</name>
    <name type="common">Fruit fly</name>
    <dbReference type="NCBI Taxonomy" id="7245"/>
    <lineage>
        <taxon>Eukaryota</taxon>
        <taxon>Metazoa</taxon>
        <taxon>Ecdysozoa</taxon>
        <taxon>Arthropoda</taxon>
        <taxon>Hexapoda</taxon>
        <taxon>Insecta</taxon>
        <taxon>Pterygota</taxon>
        <taxon>Neoptera</taxon>
        <taxon>Endopterygota</taxon>
        <taxon>Diptera</taxon>
        <taxon>Brachycera</taxon>
        <taxon>Muscomorpha</taxon>
        <taxon>Ephydroidea</taxon>
        <taxon>Drosophilidae</taxon>
        <taxon>Drosophila</taxon>
        <taxon>Sophophora</taxon>
    </lineage>
</organism>